<gene>
    <name evidence="5" type="primary">dltB</name>
    <name type="ordered locus">BSU38510</name>
    <name type="ORF">ipa-4r</name>
</gene>
<sequence length="395" mass="46736">MTPYSSFLFFILLGILLLPTIILGLNGKRFQAYNMFISIIILALIFSHDLHGVIALCLFTIWQVLLISGYLAYRQKANSGFVFCGAVIASILPLFLSKIWPFLSHPQPHHPPHNLISFLGISYLTFKGVQLIMEARDGLLKEQLPLHRLLYFILFFPTISSGPIDRYRRFVKDEQKAWTKEEYADLLYTGIHKIFIGFLYKFIIGYAINTYFIMNLPAITHNKILGNLLYMYGYSMYLFFDFAGYTMFAVGVSYIMGIKSPENFNKPFISKNIKDFWNRWHMSLSFWFRDYVFMRFVFWMTKKKWIKNRMAVSNIGYFLLFMLMGVWHGLAPQYIIYGLYHAVLMTCYNFFEKWNKKYKWLPSNRWTTILAIVITFHFVCFGFYIFSGKPFHHHH</sequence>
<protein>
    <recommendedName>
        <fullName evidence="1">Teichoic acid D-alanyltransferase</fullName>
        <ecNumber evidence="1">2.3.1.-</ecNumber>
    </recommendedName>
</protein>
<evidence type="ECO:0000250" key="1">
    <source>
        <dbReference type="UniProtKB" id="Q5M4V4"/>
    </source>
</evidence>
<evidence type="ECO:0000255" key="2"/>
<evidence type="ECO:0000269" key="3">
    <source>
    </source>
</evidence>
<evidence type="ECO:0000269" key="4">
    <source>
    </source>
</evidence>
<evidence type="ECO:0000303" key="5">
    <source>
    </source>
</evidence>
<evidence type="ECO:0000305" key="6"/>
<evidence type="ECO:0000305" key="7">
    <source>
    </source>
</evidence>
<evidence type="ECO:0000305" key="8">
    <source>
    </source>
</evidence>
<reference key="1">
    <citation type="journal article" date="1993" name="Mol. Microbiol.">
        <title>Bacillus subtilis genome project: cloning and sequencing of the 97 kb region from 325 degrees to 333 degrees.</title>
        <authorList>
            <person name="Glaser P."/>
            <person name="Kunst F."/>
            <person name="Arnaud M."/>
            <person name="Coudart M.P."/>
            <person name="Gonzales W."/>
            <person name="Hullo M.-F."/>
            <person name="Ionescu M."/>
            <person name="Lubochinsky B."/>
            <person name="Marcelino L."/>
            <person name="Moszer I."/>
            <person name="Presecan E."/>
            <person name="Santana M."/>
            <person name="Schneider E."/>
            <person name="Schweizer J."/>
            <person name="Vertes A."/>
            <person name="Rapoport G."/>
            <person name="Danchin A."/>
        </authorList>
    </citation>
    <scope>NUCLEOTIDE SEQUENCE [GENOMIC DNA]</scope>
    <source>
        <strain>168</strain>
    </source>
</reference>
<reference key="2">
    <citation type="journal article" date="1997" name="Nature">
        <title>The complete genome sequence of the Gram-positive bacterium Bacillus subtilis.</title>
        <authorList>
            <person name="Kunst F."/>
            <person name="Ogasawara N."/>
            <person name="Moszer I."/>
            <person name="Albertini A.M."/>
            <person name="Alloni G."/>
            <person name="Azevedo V."/>
            <person name="Bertero M.G."/>
            <person name="Bessieres P."/>
            <person name="Bolotin A."/>
            <person name="Borchert S."/>
            <person name="Borriss R."/>
            <person name="Boursier L."/>
            <person name="Brans A."/>
            <person name="Braun M."/>
            <person name="Brignell S.C."/>
            <person name="Bron S."/>
            <person name="Brouillet S."/>
            <person name="Bruschi C.V."/>
            <person name="Caldwell B."/>
            <person name="Capuano V."/>
            <person name="Carter N.M."/>
            <person name="Choi S.-K."/>
            <person name="Codani J.-J."/>
            <person name="Connerton I.F."/>
            <person name="Cummings N.J."/>
            <person name="Daniel R.A."/>
            <person name="Denizot F."/>
            <person name="Devine K.M."/>
            <person name="Duesterhoeft A."/>
            <person name="Ehrlich S.D."/>
            <person name="Emmerson P.T."/>
            <person name="Entian K.-D."/>
            <person name="Errington J."/>
            <person name="Fabret C."/>
            <person name="Ferrari E."/>
            <person name="Foulger D."/>
            <person name="Fritz C."/>
            <person name="Fujita M."/>
            <person name="Fujita Y."/>
            <person name="Fuma S."/>
            <person name="Galizzi A."/>
            <person name="Galleron N."/>
            <person name="Ghim S.-Y."/>
            <person name="Glaser P."/>
            <person name="Goffeau A."/>
            <person name="Golightly E.J."/>
            <person name="Grandi G."/>
            <person name="Guiseppi G."/>
            <person name="Guy B.J."/>
            <person name="Haga K."/>
            <person name="Haiech J."/>
            <person name="Harwood C.R."/>
            <person name="Henaut A."/>
            <person name="Hilbert H."/>
            <person name="Holsappel S."/>
            <person name="Hosono S."/>
            <person name="Hullo M.-F."/>
            <person name="Itaya M."/>
            <person name="Jones L.-M."/>
            <person name="Joris B."/>
            <person name="Karamata D."/>
            <person name="Kasahara Y."/>
            <person name="Klaerr-Blanchard M."/>
            <person name="Klein C."/>
            <person name="Kobayashi Y."/>
            <person name="Koetter P."/>
            <person name="Koningstein G."/>
            <person name="Krogh S."/>
            <person name="Kumano M."/>
            <person name="Kurita K."/>
            <person name="Lapidus A."/>
            <person name="Lardinois S."/>
            <person name="Lauber J."/>
            <person name="Lazarevic V."/>
            <person name="Lee S.-M."/>
            <person name="Levine A."/>
            <person name="Liu H."/>
            <person name="Masuda S."/>
            <person name="Mauel C."/>
            <person name="Medigue C."/>
            <person name="Medina N."/>
            <person name="Mellado R.P."/>
            <person name="Mizuno M."/>
            <person name="Moestl D."/>
            <person name="Nakai S."/>
            <person name="Noback M."/>
            <person name="Noone D."/>
            <person name="O'Reilly M."/>
            <person name="Ogawa K."/>
            <person name="Ogiwara A."/>
            <person name="Oudega B."/>
            <person name="Park S.-H."/>
            <person name="Parro V."/>
            <person name="Pohl T.M."/>
            <person name="Portetelle D."/>
            <person name="Porwollik S."/>
            <person name="Prescott A.M."/>
            <person name="Presecan E."/>
            <person name="Pujic P."/>
            <person name="Purnelle B."/>
            <person name="Rapoport G."/>
            <person name="Rey M."/>
            <person name="Reynolds S."/>
            <person name="Rieger M."/>
            <person name="Rivolta C."/>
            <person name="Rocha E."/>
            <person name="Roche B."/>
            <person name="Rose M."/>
            <person name="Sadaie Y."/>
            <person name="Sato T."/>
            <person name="Scanlan E."/>
            <person name="Schleich S."/>
            <person name="Schroeter R."/>
            <person name="Scoffone F."/>
            <person name="Sekiguchi J."/>
            <person name="Sekowska A."/>
            <person name="Seror S.J."/>
            <person name="Serror P."/>
            <person name="Shin B.-S."/>
            <person name="Soldo B."/>
            <person name="Sorokin A."/>
            <person name="Tacconi E."/>
            <person name="Takagi T."/>
            <person name="Takahashi H."/>
            <person name="Takemaru K."/>
            <person name="Takeuchi M."/>
            <person name="Tamakoshi A."/>
            <person name="Tanaka T."/>
            <person name="Terpstra P."/>
            <person name="Tognoni A."/>
            <person name="Tosato V."/>
            <person name="Uchiyama S."/>
            <person name="Vandenbol M."/>
            <person name="Vannier F."/>
            <person name="Vassarotti A."/>
            <person name="Viari A."/>
            <person name="Wambutt R."/>
            <person name="Wedler E."/>
            <person name="Wedler H."/>
            <person name="Weitzenegger T."/>
            <person name="Winters P."/>
            <person name="Wipat A."/>
            <person name="Yamamoto H."/>
            <person name="Yamane K."/>
            <person name="Yasumoto K."/>
            <person name="Yata K."/>
            <person name="Yoshida K."/>
            <person name="Yoshikawa H.-F."/>
            <person name="Zumstein E."/>
            <person name="Yoshikawa H."/>
            <person name="Danchin A."/>
        </authorList>
    </citation>
    <scope>NUCLEOTIDE SEQUENCE [LARGE SCALE GENOMIC DNA]</scope>
    <source>
        <strain>168</strain>
    </source>
</reference>
<reference key="3">
    <citation type="journal article" date="1995" name="J. Biol. Chem.">
        <title>Incorporation of D-alanine into lipoteichoic acid and wall teichoic acid in Bacillus subtilis. Identification of genes and regulation.</title>
        <authorList>
            <person name="Perego M."/>
            <person name="Glaser P."/>
            <person name="Minutello A."/>
            <person name="Strauch M.A."/>
            <person name="Leopold K."/>
            <person name="Fischer W."/>
        </authorList>
    </citation>
    <scope>FUNCTION</scope>
</reference>
<reference key="4">
    <citation type="journal article" date="2000" name="Trends Biochem. Sci.">
        <title>A superfamily of membrane-bound O-acyltransferases with implications for wnt signaling.</title>
        <authorList>
            <person name="Hofmann K."/>
        </authorList>
    </citation>
    <scope>GENE FAMILY</scope>
    <scope>PROBABLE ACTIVE SITE</scope>
</reference>
<reference key="5">
    <citation type="journal article" date="2018" name="Nature">
        <title>Crystal structure of a membrane-bound O-acyltransferase.</title>
        <authorList>
            <person name="Ma D."/>
            <person name="Wang Z."/>
            <person name="Merrikh C.N."/>
            <person name="Lang K.S."/>
            <person name="Lu P."/>
            <person name="Li X."/>
            <person name="Merrikh H."/>
            <person name="Rao Z."/>
            <person name="Xu W."/>
        </authorList>
    </citation>
    <scope>FUNCTION</scope>
    <scope>MUTAGENESIS OF HIS-281; SER-285; 297-VAL-PHE-298 AND HIS-328</scope>
    <scope>ACTIVE SITE</scope>
</reference>
<feature type="chain" id="PRO_0000213128" description="Teichoic acid D-alanyltransferase">
    <location>
        <begin position="1"/>
        <end position="395"/>
    </location>
</feature>
<feature type="topological domain" description="Extracellular" evidence="6">
    <location>
        <begin position="1"/>
        <end position="6"/>
    </location>
</feature>
<feature type="transmembrane region" description="Helical" evidence="1">
    <location>
        <begin position="7"/>
        <end position="26"/>
    </location>
</feature>
<feature type="topological domain" description="Cytoplasmic" evidence="6">
    <location>
        <begin position="27"/>
        <end position="30"/>
    </location>
</feature>
<feature type="transmembrane region" description="Helical" evidence="1">
    <location>
        <begin position="31"/>
        <end position="46"/>
    </location>
</feature>
<feature type="topological domain" description="Extracellular" evidence="6">
    <location>
        <begin position="47"/>
        <end position="50"/>
    </location>
</feature>
<feature type="transmembrane region" description="Helical" evidence="1">
    <location>
        <begin position="51"/>
        <end position="76"/>
    </location>
</feature>
<feature type="topological domain" description="Cytoplasmic" evidence="6">
    <location>
        <begin position="77"/>
        <end position="79"/>
    </location>
</feature>
<feature type="transmembrane region" description="Helical" evidence="1">
    <location>
        <begin position="80"/>
        <end position="104"/>
    </location>
</feature>
<feature type="topological domain" description="Extracellular" evidence="6">
    <location>
        <begin position="105"/>
        <end position="120"/>
    </location>
</feature>
<feature type="transmembrane region" description="Helical" evidence="1">
    <location>
        <begin position="121"/>
        <end position="137"/>
    </location>
</feature>
<feature type="topological domain" description="Cytoplasmic" evidence="6">
    <location>
        <begin position="138"/>
        <end position="145"/>
    </location>
</feature>
<feature type="intramembrane region" evidence="1">
    <location>
        <begin position="146"/>
        <end position="175"/>
    </location>
</feature>
<feature type="topological domain" description="Cytoplasmic" evidence="6">
    <location>
        <begin position="176"/>
        <end position="179"/>
    </location>
</feature>
<feature type="transmembrane region" description="Helical" evidence="1">
    <location>
        <begin position="180"/>
        <end position="223"/>
    </location>
</feature>
<feature type="topological domain" description="Extracellular" evidence="6">
    <location>
        <position position="224"/>
    </location>
</feature>
<feature type="transmembrane region" description="Helical" evidence="1">
    <location>
        <begin position="225"/>
        <end position="256"/>
    </location>
</feature>
<feature type="topological domain" description="Cytoplasmic" evidence="6">
    <location>
        <begin position="257"/>
        <end position="266"/>
    </location>
</feature>
<feature type="intramembrane region" evidence="1">
    <location>
        <begin position="267"/>
        <end position="303"/>
    </location>
</feature>
<feature type="topological domain" description="Cytoplasmic" evidence="6">
    <location>
        <begin position="304"/>
        <end position="308"/>
    </location>
</feature>
<feature type="transmembrane region" description="Helical" evidence="1">
    <location>
        <begin position="309"/>
        <end position="328"/>
    </location>
</feature>
<feature type="topological domain" description="Extracellular" evidence="6">
    <location>
        <begin position="329"/>
        <end position="333"/>
    </location>
</feature>
<feature type="transmembrane region" description="Helical" evidence="2">
    <location>
        <begin position="334"/>
        <end position="351"/>
    </location>
</feature>
<feature type="topological domain" description="Cytoplasmic" evidence="6">
    <location>
        <begin position="352"/>
        <end position="364"/>
    </location>
</feature>
<feature type="transmembrane region" description="Helical" evidence="1">
    <location>
        <begin position="365"/>
        <end position="387"/>
    </location>
</feature>
<feature type="topological domain" description="Extracellular" evidence="6">
    <location>
        <begin position="388"/>
        <end position="395"/>
    </location>
</feature>
<feature type="active site" evidence="3 7">
    <location>
        <position position="328"/>
    </location>
</feature>
<feature type="mutagenesis site" description="Does not affect D-alanylation of lipoteichoic acid (LTA)." evidence="3">
    <original>H</original>
    <variation>A</variation>
    <location>
        <position position="281"/>
    </location>
</feature>
<feature type="mutagenesis site" description="Does not affect D-alanylation of lipoteichoic acid (LTA)." evidence="3">
    <original>S</original>
    <variation>A</variation>
    <location>
        <position position="285"/>
    </location>
</feature>
<feature type="mutagenesis site" description="Abolished D-alanylation of lipoteichoic acid (LTA)." evidence="3">
    <original>VF</original>
    <variation>DD</variation>
    <location>
        <begin position="297"/>
        <end position="298"/>
    </location>
</feature>
<feature type="mutagenesis site" description="Abolished D-alanylation of lipoteichoic acid (LTA)." evidence="3">
    <original>H</original>
    <variation>A</variation>
    <location>
        <position position="328"/>
    </location>
</feature>
<accession>P39580</accession>
<name>DLTB_BACSU</name>
<keyword id="KW-0012">Acyltransferase</keyword>
<keyword id="KW-1003">Cell membrane</keyword>
<keyword id="KW-0472">Membrane</keyword>
<keyword id="KW-1185">Reference proteome</keyword>
<keyword id="KW-0808">Transferase</keyword>
<keyword id="KW-0812">Transmembrane</keyword>
<keyword id="KW-1133">Transmembrane helix</keyword>
<comment type="function">
    <text evidence="3 4">O-acyltransferase that catalyzes D-alanylation of both teichoic acid and lipoteichoic acid (LTA) (PubMed:30283133). D-alanylation of LTA plays an important role in modulating the properties of the cell wall in Gram-positive bacteria, influencing the net charge of the cell wall (PubMed:7797557). Catalyzes D-alanylation from DltC carrier protein (PubMed:30283133).</text>
</comment>
<comment type="pathway">
    <text evidence="8">Cell wall biogenesis; lipoteichoic acid biosynthesis.</text>
</comment>
<comment type="subcellular location">
    <subcellularLocation>
        <location evidence="1">Cell membrane</location>
        <topology evidence="1">Multi-pass membrane protein</topology>
    </subcellularLocation>
</comment>
<comment type="domain">
    <text evidence="1">Consists of a ring of transmembrane domains, which shield a highly conserved extracellular structural funnel extending into the middle of the lipid bilayer. The conserved catalytic His residue is located at the bottom of this funnel and is connected to the intracellular DltC through a narrow tunnel.</text>
</comment>
<comment type="similarity">
    <text evidence="6">Belongs to the membrane-bound acyltransferase family.</text>
</comment>
<proteinExistence type="evidence at protein level"/>
<organism>
    <name type="scientific">Bacillus subtilis (strain 168)</name>
    <dbReference type="NCBI Taxonomy" id="224308"/>
    <lineage>
        <taxon>Bacteria</taxon>
        <taxon>Bacillati</taxon>
        <taxon>Bacillota</taxon>
        <taxon>Bacilli</taxon>
        <taxon>Bacillales</taxon>
        <taxon>Bacillaceae</taxon>
        <taxon>Bacillus</taxon>
    </lineage>
</organism>
<dbReference type="EC" id="2.3.1.-" evidence="1"/>
<dbReference type="EMBL" id="X73124">
    <property type="protein sequence ID" value="CAA51560.1"/>
    <property type="molecule type" value="Genomic_DNA"/>
</dbReference>
<dbReference type="EMBL" id="AL009126">
    <property type="protein sequence ID" value="CAB15877.1"/>
    <property type="molecule type" value="Genomic_DNA"/>
</dbReference>
<dbReference type="PIR" id="S39659">
    <property type="entry name" value="S39659"/>
</dbReference>
<dbReference type="RefSeq" id="NP_391730.1">
    <property type="nucleotide sequence ID" value="NC_000964.3"/>
</dbReference>
<dbReference type="RefSeq" id="WP_003227327.1">
    <property type="nucleotide sequence ID" value="NZ_OZ025638.1"/>
</dbReference>
<dbReference type="SMR" id="P39580"/>
<dbReference type="FunCoup" id="P39580">
    <property type="interactions" value="212"/>
</dbReference>
<dbReference type="STRING" id="224308.BSU38510"/>
<dbReference type="TCDB" id="2.A.50.2.1">
    <property type="family name" value="the glycerol uptake (gup) or membrane-bound acyl transferase (mboat) family"/>
</dbReference>
<dbReference type="PaxDb" id="224308-BSU38510"/>
<dbReference type="EnsemblBacteria" id="CAB15877">
    <property type="protein sequence ID" value="CAB15877"/>
    <property type="gene ID" value="BSU_38510"/>
</dbReference>
<dbReference type="GeneID" id="937360"/>
<dbReference type="KEGG" id="bsu:BSU38510"/>
<dbReference type="PATRIC" id="fig|224308.179.peg.4170"/>
<dbReference type="eggNOG" id="COG1696">
    <property type="taxonomic scope" value="Bacteria"/>
</dbReference>
<dbReference type="InParanoid" id="P39580"/>
<dbReference type="OrthoDB" id="9805788at2"/>
<dbReference type="PhylomeDB" id="P39580"/>
<dbReference type="BioCyc" id="BSUB:BSU38510-MONOMER"/>
<dbReference type="BioCyc" id="MetaCyc:BSU38510-MONOMER"/>
<dbReference type="UniPathway" id="UPA00556"/>
<dbReference type="Proteomes" id="UP000001570">
    <property type="component" value="Chromosome"/>
</dbReference>
<dbReference type="GO" id="GO:0005886">
    <property type="term" value="C:plasma membrane"/>
    <property type="evidence" value="ECO:0007669"/>
    <property type="project" value="UniProtKB-SubCell"/>
</dbReference>
<dbReference type="GO" id="GO:0016746">
    <property type="term" value="F:acyltransferase activity"/>
    <property type="evidence" value="ECO:0000318"/>
    <property type="project" value="GO_Central"/>
</dbReference>
<dbReference type="GO" id="GO:0070395">
    <property type="term" value="P:lipoteichoic acid biosynthetic process"/>
    <property type="evidence" value="ECO:0007669"/>
    <property type="project" value="UniProtKB-UniPathway"/>
</dbReference>
<dbReference type="InterPro" id="IPR024194">
    <property type="entry name" value="Ac/AlaTfrase_AlgI/DltB"/>
</dbReference>
<dbReference type="InterPro" id="IPR024024">
    <property type="entry name" value="DltB"/>
</dbReference>
<dbReference type="InterPro" id="IPR051085">
    <property type="entry name" value="MB_O-acyltransferase"/>
</dbReference>
<dbReference type="InterPro" id="IPR004299">
    <property type="entry name" value="MBOAT_fam"/>
</dbReference>
<dbReference type="NCBIfam" id="TIGR04091">
    <property type="entry name" value="LTA_dltB"/>
    <property type="match status" value="1"/>
</dbReference>
<dbReference type="PANTHER" id="PTHR13285">
    <property type="entry name" value="ACYLTRANSFERASE"/>
    <property type="match status" value="1"/>
</dbReference>
<dbReference type="PANTHER" id="PTHR13285:SF23">
    <property type="entry name" value="TEICHOIC ACID D-ALANYLTRANSFERASE"/>
    <property type="match status" value="1"/>
</dbReference>
<dbReference type="Pfam" id="PF03062">
    <property type="entry name" value="MBOAT"/>
    <property type="match status" value="1"/>
</dbReference>
<dbReference type="PIRSF" id="PIRSF016636">
    <property type="entry name" value="AlgI_DltB"/>
    <property type="match status" value="1"/>
</dbReference>
<dbReference type="PIRSF" id="PIRSF500216">
    <property type="entry name" value="DltB"/>
    <property type="match status" value="1"/>
</dbReference>